<comment type="catalytic activity">
    <reaction>
        <text>D-ribose 5-phosphate + ATP = 5-phospho-alpha-D-ribose 1-diphosphate + AMP + H(+)</text>
        <dbReference type="Rhea" id="RHEA:15609"/>
        <dbReference type="ChEBI" id="CHEBI:15378"/>
        <dbReference type="ChEBI" id="CHEBI:30616"/>
        <dbReference type="ChEBI" id="CHEBI:58017"/>
        <dbReference type="ChEBI" id="CHEBI:78346"/>
        <dbReference type="ChEBI" id="CHEBI:456215"/>
        <dbReference type="EC" id="2.7.6.1"/>
    </reaction>
</comment>
<comment type="similarity">
    <text evidence="2">Belongs to the ribose-phosphate pyrophosphokinase family.</text>
</comment>
<evidence type="ECO:0000255" key="1"/>
<evidence type="ECO:0000305" key="2"/>
<evidence type="ECO:0007744" key="3">
    <source>
    </source>
</evidence>
<reference key="1">
    <citation type="journal article" date="1999" name="Biochim. Biophys. Acta">
        <title>Cloning and sequencing of cDNAs specifying a novel class of phosphoribosyl diphosphate synthase in Arabidopsis thaliana.</title>
        <authorList>
            <person name="Krath B.N."/>
            <person name="Eriksen T.A."/>
            <person name="Poulsen T.S."/>
            <person name="Hove-Jensen B."/>
        </authorList>
    </citation>
    <scope>NUCLEOTIDE SEQUENCE [MRNA]</scope>
    <source>
        <strain>cv. Columbia</strain>
        <tissue>Leaf</tissue>
    </source>
</reference>
<reference key="2">
    <citation type="journal article" date="1999" name="Nature">
        <title>Sequence and analysis of chromosome 2 of the plant Arabidopsis thaliana.</title>
        <authorList>
            <person name="Lin X."/>
            <person name="Kaul S."/>
            <person name="Rounsley S.D."/>
            <person name="Shea T.P."/>
            <person name="Benito M.-I."/>
            <person name="Town C.D."/>
            <person name="Fujii C.Y."/>
            <person name="Mason T.M."/>
            <person name="Bowman C.L."/>
            <person name="Barnstead M.E."/>
            <person name="Feldblyum T.V."/>
            <person name="Buell C.R."/>
            <person name="Ketchum K.A."/>
            <person name="Lee J.J."/>
            <person name="Ronning C.M."/>
            <person name="Koo H.L."/>
            <person name="Moffat K.S."/>
            <person name="Cronin L.A."/>
            <person name="Shen M."/>
            <person name="Pai G."/>
            <person name="Van Aken S."/>
            <person name="Umayam L."/>
            <person name="Tallon L.J."/>
            <person name="Gill J.E."/>
            <person name="Adams M.D."/>
            <person name="Carrera A.J."/>
            <person name="Creasy T.H."/>
            <person name="Goodman H.M."/>
            <person name="Somerville C.R."/>
            <person name="Copenhaver G.P."/>
            <person name="Preuss D."/>
            <person name="Nierman W.C."/>
            <person name="White O."/>
            <person name="Eisen J.A."/>
            <person name="Salzberg S.L."/>
            <person name="Fraser C.M."/>
            <person name="Venter J.C."/>
        </authorList>
    </citation>
    <scope>NUCLEOTIDE SEQUENCE [LARGE SCALE GENOMIC DNA]</scope>
    <source>
        <strain>cv. Columbia</strain>
    </source>
</reference>
<reference key="3">
    <citation type="journal article" date="2017" name="Plant J.">
        <title>Araport11: a complete reannotation of the Arabidopsis thaliana reference genome.</title>
        <authorList>
            <person name="Cheng C.Y."/>
            <person name="Krishnakumar V."/>
            <person name="Chan A.P."/>
            <person name="Thibaud-Nissen F."/>
            <person name="Schobel S."/>
            <person name="Town C.D."/>
        </authorList>
    </citation>
    <scope>GENOME REANNOTATION</scope>
    <source>
        <strain>cv. Columbia</strain>
    </source>
</reference>
<reference key="4">
    <citation type="journal article" date="2003" name="Science">
        <title>Empirical analysis of transcriptional activity in the Arabidopsis genome.</title>
        <authorList>
            <person name="Yamada K."/>
            <person name="Lim J."/>
            <person name="Dale J.M."/>
            <person name="Chen H."/>
            <person name="Shinn P."/>
            <person name="Palm C.J."/>
            <person name="Southwick A.M."/>
            <person name="Wu H.C."/>
            <person name="Kim C.J."/>
            <person name="Nguyen M."/>
            <person name="Pham P.K."/>
            <person name="Cheuk R.F."/>
            <person name="Karlin-Newmann G."/>
            <person name="Liu S.X."/>
            <person name="Lam B."/>
            <person name="Sakano H."/>
            <person name="Wu T."/>
            <person name="Yu G."/>
            <person name="Miranda M."/>
            <person name="Quach H.L."/>
            <person name="Tripp M."/>
            <person name="Chang C.H."/>
            <person name="Lee J.M."/>
            <person name="Toriumi M.J."/>
            <person name="Chan M.M."/>
            <person name="Tang C.C."/>
            <person name="Onodera C.S."/>
            <person name="Deng J.M."/>
            <person name="Akiyama K."/>
            <person name="Ansari Y."/>
            <person name="Arakawa T."/>
            <person name="Banh J."/>
            <person name="Banno F."/>
            <person name="Bowser L."/>
            <person name="Brooks S.Y."/>
            <person name="Carninci P."/>
            <person name="Chao Q."/>
            <person name="Choy N."/>
            <person name="Enju A."/>
            <person name="Goldsmith A.D."/>
            <person name="Gurjal M."/>
            <person name="Hansen N.F."/>
            <person name="Hayashizaki Y."/>
            <person name="Johnson-Hopson C."/>
            <person name="Hsuan V.W."/>
            <person name="Iida K."/>
            <person name="Karnes M."/>
            <person name="Khan S."/>
            <person name="Koesema E."/>
            <person name="Ishida J."/>
            <person name="Jiang P.X."/>
            <person name="Jones T."/>
            <person name="Kawai J."/>
            <person name="Kamiya A."/>
            <person name="Meyers C."/>
            <person name="Nakajima M."/>
            <person name="Narusaka M."/>
            <person name="Seki M."/>
            <person name="Sakurai T."/>
            <person name="Satou M."/>
            <person name="Tamse R."/>
            <person name="Vaysberg M."/>
            <person name="Wallender E.K."/>
            <person name="Wong C."/>
            <person name="Yamamura Y."/>
            <person name="Yuan S."/>
            <person name="Shinozaki K."/>
            <person name="Davis R.W."/>
            <person name="Theologis A."/>
            <person name="Ecker J.R."/>
        </authorList>
    </citation>
    <scope>NUCLEOTIDE SEQUENCE [LARGE SCALE MRNA]</scope>
    <source>
        <strain>cv. Columbia</strain>
    </source>
</reference>
<reference key="5">
    <citation type="submission" date="2002-03" db="EMBL/GenBank/DDBJ databases">
        <title>Full-length cDNA from Arabidopsis thaliana.</title>
        <authorList>
            <person name="Brover V.V."/>
            <person name="Troukhan M.E."/>
            <person name="Alexandrov N.A."/>
            <person name="Lu Y.-P."/>
            <person name="Flavell R.B."/>
            <person name="Feldmann K.A."/>
        </authorList>
    </citation>
    <scope>NUCLEOTIDE SEQUENCE [LARGE SCALE MRNA]</scope>
</reference>
<reference key="6">
    <citation type="submission" date="2004-09" db="EMBL/GenBank/DDBJ databases">
        <title>Large-scale analysis of RIKEN Arabidopsis full-length (RAFL) cDNAs.</title>
        <authorList>
            <person name="Totoki Y."/>
            <person name="Seki M."/>
            <person name="Ishida J."/>
            <person name="Nakajima M."/>
            <person name="Enju A."/>
            <person name="Kamiya A."/>
            <person name="Narusaka M."/>
            <person name="Shin-i T."/>
            <person name="Nakagawa M."/>
            <person name="Sakamoto N."/>
            <person name="Oishi K."/>
            <person name="Kohara Y."/>
            <person name="Kobayashi M."/>
            <person name="Toyoda A."/>
            <person name="Sakaki Y."/>
            <person name="Sakurai T."/>
            <person name="Iida K."/>
            <person name="Akiyama K."/>
            <person name="Satou M."/>
            <person name="Toyoda T."/>
            <person name="Konagaya A."/>
            <person name="Carninci P."/>
            <person name="Kawai J."/>
            <person name="Hayashizaki Y."/>
            <person name="Shinozaki K."/>
        </authorList>
    </citation>
    <scope>NUCLEOTIDE SEQUENCE [LARGE SCALE MRNA] OF 246-337</scope>
    <source>
        <strain>cv. Columbia</strain>
    </source>
</reference>
<reference key="7">
    <citation type="journal article" date="2012" name="Mol. Cell. Proteomics">
        <title>Comparative large-scale characterisation of plant vs. mammal proteins reveals similar and idiosyncratic N-alpha acetylation features.</title>
        <authorList>
            <person name="Bienvenut W.V."/>
            <person name="Sumpton D."/>
            <person name="Martinez A."/>
            <person name="Lilla S."/>
            <person name="Espagne C."/>
            <person name="Meinnel T."/>
            <person name="Giglione C."/>
        </authorList>
    </citation>
    <scope>ACETYLATION [LARGE SCALE ANALYSIS] AT SER-2</scope>
    <scope>CLEAVAGE OF INITIATOR METHIONINE [LARGE SCALE ANALYSIS]</scope>
    <scope>IDENTIFICATION BY MASS SPECTROMETRY [LARGE SCALE ANALYSIS]</scope>
</reference>
<protein>
    <recommendedName>
        <fullName>Ribose-phosphate pyrophosphokinase 4</fullName>
        <ecNumber>2.7.6.1</ecNumber>
    </recommendedName>
    <alternativeName>
        <fullName>Phosphoribosyl pyrophosphate synthase 4</fullName>
    </alternativeName>
</protein>
<feature type="initiator methionine" description="Removed" evidence="3">
    <location>
        <position position="1"/>
    </location>
</feature>
<feature type="chain" id="PRO_0000141095" description="Ribose-phosphate pyrophosphokinase 4">
    <location>
        <begin position="2"/>
        <end position="337"/>
    </location>
</feature>
<feature type="region of interest" description="Binding of phosphoribosylpyrophosphate" evidence="1">
    <location>
        <begin position="241"/>
        <end position="256"/>
    </location>
</feature>
<feature type="binding site" evidence="1">
    <location>
        <position position="158"/>
    </location>
    <ligand>
        <name>Mg(2+)</name>
        <dbReference type="ChEBI" id="CHEBI:18420"/>
    </ligand>
</feature>
<feature type="binding site" evidence="1">
    <location>
        <position position="160"/>
    </location>
    <ligand>
        <name>Mg(2+)</name>
        <dbReference type="ChEBI" id="CHEBI:18420"/>
    </ligand>
</feature>
<feature type="modified residue" description="N-acetylserine" evidence="3">
    <location>
        <position position="2"/>
    </location>
</feature>
<feature type="sequence conflict" description="In Ref. 6; BAD43725." evidence="2" ref="6">
    <original>K</original>
    <variation>R</variation>
    <location>
        <position position="293"/>
    </location>
</feature>
<sequence>MSENAANNIMETKICTDAIVSELQKKKVHLFYCLECEELARNIAAESDHITLQSINWRSFADGFPNLFINNAHDIRGQHVAFLASFSSPAVIFEQISVIYLLPRLFVASFTLVLPFFPTGSFERMEEEGDVATAFTMARIVSNIPISRGGPTSVVIYDIHALQERFYFADQVLPLFETGIPLLTKRLQQLPETEKVIVAFPDDGAWKRFHKLLDHYPTVVCTKVREGDKRIVRLKEGNPAGCHVVIVDDLVQSGGTLIECQKVLAAHGAVKVSAYVTHGVFPKSSWERFTHKKNGLEEAFAYFWITDSCPQTVKAIGNKAPFEVLSLAGSIADALQI</sequence>
<name>KPRS4_ARATH</name>
<gene>
    <name type="primary">PRS4</name>
    <name type="ordered locus">At2g42910</name>
    <name type="ORF">F23E6.7</name>
    <name type="ORF">F7D19.9</name>
</gene>
<proteinExistence type="evidence at protein level"/>
<organism>
    <name type="scientific">Arabidopsis thaliana</name>
    <name type="common">Mouse-ear cress</name>
    <dbReference type="NCBI Taxonomy" id="3702"/>
    <lineage>
        <taxon>Eukaryota</taxon>
        <taxon>Viridiplantae</taxon>
        <taxon>Streptophyta</taxon>
        <taxon>Embryophyta</taxon>
        <taxon>Tracheophyta</taxon>
        <taxon>Spermatophyta</taxon>
        <taxon>Magnoliopsida</taxon>
        <taxon>eudicotyledons</taxon>
        <taxon>Gunneridae</taxon>
        <taxon>Pentapetalae</taxon>
        <taxon>rosids</taxon>
        <taxon>malvids</taxon>
        <taxon>Brassicales</taxon>
        <taxon>Brassicaceae</taxon>
        <taxon>Camelineae</taxon>
        <taxon>Arabidopsis</taxon>
    </lineage>
</organism>
<keyword id="KW-0007">Acetylation</keyword>
<keyword id="KW-0067">ATP-binding</keyword>
<keyword id="KW-0418">Kinase</keyword>
<keyword id="KW-0460">Magnesium</keyword>
<keyword id="KW-0479">Metal-binding</keyword>
<keyword id="KW-0545">Nucleotide biosynthesis</keyword>
<keyword id="KW-0547">Nucleotide-binding</keyword>
<keyword id="KW-1185">Reference proteome</keyword>
<keyword id="KW-0808">Transferase</keyword>
<accession>Q680A5</accession>
<accession>Q9S7B9</accession>
<dbReference type="EC" id="2.7.6.1"/>
<dbReference type="EMBL" id="AJ012407">
    <property type="protein sequence ID" value="CAB43553.1"/>
    <property type="molecule type" value="mRNA"/>
</dbReference>
<dbReference type="EMBL" id="AC006580">
    <property type="protein sequence ID" value="AAM15296.1"/>
    <property type="molecule type" value="Genomic_DNA"/>
</dbReference>
<dbReference type="EMBL" id="AC006931">
    <property type="protein sequence ID" value="AAD21718.1"/>
    <property type="molecule type" value="Genomic_DNA"/>
</dbReference>
<dbReference type="EMBL" id="CP002685">
    <property type="protein sequence ID" value="AEC10186.1"/>
    <property type="molecule type" value="Genomic_DNA"/>
</dbReference>
<dbReference type="EMBL" id="AY128402">
    <property type="protein sequence ID" value="AAM91605.1"/>
    <property type="molecule type" value="mRNA"/>
</dbReference>
<dbReference type="EMBL" id="BT000083">
    <property type="protein sequence ID" value="AAN15402.1"/>
    <property type="molecule type" value="mRNA"/>
</dbReference>
<dbReference type="EMBL" id="AY087406">
    <property type="protein sequence ID" value="AAM64955.1"/>
    <property type="molecule type" value="mRNA"/>
</dbReference>
<dbReference type="EMBL" id="AK175962">
    <property type="protein sequence ID" value="BAD43725.1"/>
    <property type="molecule type" value="mRNA"/>
</dbReference>
<dbReference type="PIR" id="T52589">
    <property type="entry name" value="T52589"/>
</dbReference>
<dbReference type="RefSeq" id="NP_181819.1">
    <property type="nucleotide sequence ID" value="NM_129852.3"/>
</dbReference>
<dbReference type="SMR" id="Q680A5"/>
<dbReference type="BioGRID" id="4229">
    <property type="interactions" value="4"/>
</dbReference>
<dbReference type="FunCoup" id="Q680A5">
    <property type="interactions" value="1114"/>
</dbReference>
<dbReference type="IntAct" id="Q680A5">
    <property type="interactions" value="1"/>
</dbReference>
<dbReference type="STRING" id="3702.Q680A5"/>
<dbReference type="iPTMnet" id="Q680A5"/>
<dbReference type="PaxDb" id="3702-AT2G42910.1"/>
<dbReference type="ProteomicsDB" id="237164"/>
<dbReference type="EnsemblPlants" id="AT2G42910.1">
    <property type="protein sequence ID" value="AT2G42910.1"/>
    <property type="gene ID" value="AT2G42910"/>
</dbReference>
<dbReference type="GeneID" id="818892"/>
<dbReference type="Gramene" id="AT2G42910.1">
    <property type="protein sequence ID" value="AT2G42910.1"/>
    <property type="gene ID" value="AT2G42910"/>
</dbReference>
<dbReference type="KEGG" id="ath:AT2G42910"/>
<dbReference type="Araport" id="AT2G42910"/>
<dbReference type="TAIR" id="AT2G42910">
    <property type="gene designation" value="PRS4"/>
</dbReference>
<dbReference type="eggNOG" id="KOG1448">
    <property type="taxonomic scope" value="Eukaryota"/>
</dbReference>
<dbReference type="HOGENOM" id="CLU_048814_0_0_1"/>
<dbReference type="InParanoid" id="Q680A5"/>
<dbReference type="OMA" id="FENFWIT"/>
<dbReference type="OrthoDB" id="10263753at2759"/>
<dbReference type="PhylomeDB" id="Q680A5"/>
<dbReference type="BioCyc" id="ARA:AT2G42910-MONOMER"/>
<dbReference type="PRO" id="PR:Q680A5"/>
<dbReference type="Proteomes" id="UP000006548">
    <property type="component" value="Chromosome 2"/>
</dbReference>
<dbReference type="ExpressionAtlas" id="Q680A5">
    <property type="expression patterns" value="baseline and differential"/>
</dbReference>
<dbReference type="GO" id="GO:0005737">
    <property type="term" value="C:cytoplasm"/>
    <property type="evidence" value="ECO:0007005"/>
    <property type="project" value="TAIR"/>
</dbReference>
<dbReference type="GO" id="GO:0005829">
    <property type="term" value="C:cytosol"/>
    <property type="evidence" value="ECO:0007005"/>
    <property type="project" value="TAIR"/>
</dbReference>
<dbReference type="GO" id="GO:0005886">
    <property type="term" value="C:plasma membrane"/>
    <property type="evidence" value="ECO:0007005"/>
    <property type="project" value="TAIR"/>
</dbReference>
<dbReference type="GO" id="GO:0009506">
    <property type="term" value="C:plasmodesma"/>
    <property type="evidence" value="ECO:0007005"/>
    <property type="project" value="TAIR"/>
</dbReference>
<dbReference type="GO" id="GO:0005524">
    <property type="term" value="F:ATP binding"/>
    <property type="evidence" value="ECO:0007669"/>
    <property type="project" value="UniProtKB-KW"/>
</dbReference>
<dbReference type="GO" id="GO:0016301">
    <property type="term" value="F:kinase activity"/>
    <property type="evidence" value="ECO:0007669"/>
    <property type="project" value="UniProtKB-KW"/>
</dbReference>
<dbReference type="GO" id="GO:0000287">
    <property type="term" value="F:magnesium ion binding"/>
    <property type="evidence" value="ECO:0007669"/>
    <property type="project" value="InterPro"/>
</dbReference>
<dbReference type="GO" id="GO:0004749">
    <property type="term" value="F:ribose phosphate diphosphokinase activity"/>
    <property type="evidence" value="ECO:0007669"/>
    <property type="project" value="UniProtKB-EC"/>
</dbReference>
<dbReference type="GO" id="GO:0009165">
    <property type="term" value="P:nucleotide biosynthetic process"/>
    <property type="evidence" value="ECO:0007669"/>
    <property type="project" value="UniProtKB-KW"/>
</dbReference>
<dbReference type="CDD" id="cd06223">
    <property type="entry name" value="PRTases_typeI"/>
    <property type="match status" value="1"/>
</dbReference>
<dbReference type="FunFam" id="3.40.50.2020:FF:000034">
    <property type="entry name" value="Ribose-phosphate pyrophosphokinase 4"/>
    <property type="match status" value="1"/>
</dbReference>
<dbReference type="FunFam" id="3.40.50.2020:FF:000032">
    <property type="entry name" value="ribose-phosphate pyrophosphokinase 4"/>
    <property type="match status" value="1"/>
</dbReference>
<dbReference type="Gene3D" id="3.40.50.2020">
    <property type="match status" value="2"/>
</dbReference>
<dbReference type="InterPro" id="IPR029099">
    <property type="entry name" value="Pribosyltran_N"/>
</dbReference>
<dbReference type="InterPro" id="IPR000836">
    <property type="entry name" value="PRibTrfase_dom"/>
</dbReference>
<dbReference type="InterPro" id="IPR029057">
    <property type="entry name" value="PRTase-like"/>
</dbReference>
<dbReference type="InterPro" id="IPR005946">
    <property type="entry name" value="Rib-P_diPkinase"/>
</dbReference>
<dbReference type="PANTHER" id="PTHR10210">
    <property type="entry name" value="RIBOSE-PHOSPHATE DIPHOSPHOKINASE FAMILY MEMBER"/>
    <property type="match status" value="1"/>
</dbReference>
<dbReference type="PANTHER" id="PTHR10210:SF34">
    <property type="entry name" value="RIBOSE-PHOSPHATE PYROPHOSPHOKINASE 4"/>
    <property type="match status" value="1"/>
</dbReference>
<dbReference type="Pfam" id="PF00156">
    <property type="entry name" value="Pribosyltran"/>
    <property type="match status" value="1"/>
</dbReference>
<dbReference type="Pfam" id="PF13793">
    <property type="entry name" value="Pribosyltran_N"/>
    <property type="match status" value="1"/>
</dbReference>
<dbReference type="SMART" id="SM01400">
    <property type="entry name" value="Pribosyltran_N"/>
    <property type="match status" value="1"/>
</dbReference>
<dbReference type="SUPFAM" id="SSF53271">
    <property type="entry name" value="PRTase-like"/>
    <property type="match status" value="2"/>
</dbReference>